<feature type="chain" id="PRO_0000146339" description="Small ribosomal subunit protein uS12">
    <location>
        <begin position="1"/>
        <end position="127"/>
    </location>
</feature>
<feature type="region of interest" description="Disordered" evidence="3">
    <location>
        <begin position="11"/>
        <end position="30"/>
    </location>
</feature>
<feature type="region of interest" description="Disordered" evidence="3">
    <location>
        <begin position="105"/>
        <end position="127"/>
    </location>
</feature>
<feature type="compositionally biased region" description="Basic residues" evidence="3">
    <location>
        <begin position="11"/>
        <end position="20"/>
    </location>
</feature>
<feature type="compositionally biased region" description="Basic residues" evidence="3">
    <location>
        <begin position="112"/>
        <end position="127"/>
    </location>
</feature>
<feature type="modified residue" description="3-methylthioaspartic acid" evidence="1">
    <location>
        <position position="89"/>
    </location>
</feature>
<name>RS12_THEMA</name>
<organism>
    <name type="scientific">Thermotoga maritima (strain ATCC 43589 / DSM 3109 / JCM 10099 / NBRC 100826 / MSB8)</name>
    <dbReference type="NCBI Taxonomy" id="243274"/>
    <lineage>
        <taxon>Bacteria</taxon>
        <taxon>Thermotogati</taxon>
        <taxon>Thermotogota</taxon>
        <taxon>Thermotogae</taxon>
        <taxon>Thermotogales</taxon>
        <taxon>Thermotogaceae</taxon>
        <taxon>Thermotoga</taxon>
    </lineage>
</organism>
<comment type="function">
    <text evidence="2">With S4 and S5 plays an important role in translational accuracy.</text>
</comment>
<comment type="function">
    <text evidence="2">Interacts with and stabilizes bases of the 16S rRNA that are involved in tRNA selection in the A site and with the mRNA backbone. Located at the interface of the 30S and 50S subunits, it traverses the body of the 30S subunit contacting proteins on the other side and probably holding the rRNA structure together. The combined cluster of proteins S8, S12 and S17 appears to hold together the shoulder and platform of the 30S subunit.</text>
</comment>
<comment type="subunit">
    <text evidence="2">Part of the 30S ribosomal subunit. Contacts proteins S8 and S17. May interact with IF1 in the 30S initiation complex.</text>
</comment>
<comment type="similarity">
    <text evidence="2">Belongs to the universal ribosomal protein uS12 family.</text>
</comment>
<comment type="sequence caution" evidence="4">
    <conflict type="erroneous initiation">
        <sequence resource="EMBL-CDS" id="AAD36572"/>
    </conflict>
</comment>
<accession>Q9X1J3</accession>
<proteinExistence type="inferred from homology"/>
<dbReference type="EMBL" id="AE000512">
    <property type="protein sequence ID" value="AAD36572.1"/>
    <property type="status" value="ALT_INIT"/>
    <property type="molecule type" value="Genomic_DNA"/>
</dbReference>
<dbReference type="PIR" id="B72244">
    <property type="entry name" value="B72244"/>
</dbReference>
<dbReference type="RefSeq" id="NP_229305.2">
    <property type="nucleotide sequence ID" value="NC_000853.1"/>
</dbReference>
<dbReference type="RefSeq" id="WP_004081846.1">
    <property type="nucleotide sequence ID" value="NZ_CP011107.1"/>
</dbReference>
<dbReference type="SMR" id="Q9X1J3"/>
<dbReference type="FunCoup" id="Q9X1J3">
    <property type="interactions" value="344"/>
</dbReference>
<dbReference type="STRING" id="243274.TM_1505"/>
<dbReference type="PaxDb" id="243274-THEMA_06775"/>
<dbReference type="EnsemblBacteria" id="AAD36572">
    <property type="protein sequence ID" value="AAD36572"/>
    <property type="gene ID" value="TM_1505"/>
</dbReference>
<dbReference type="KEGG" id="tma:TM1505"/>
<dbReference type="KEGG" id="tmi:THEMA_06775"/>
<dbReference type="KEGG" id="tmm:Tmari_1513"/>
<dbReference type="KEGG" id="tmw:THMA_1537"/>
<dbReference type="eggNOG" id="COG0048">
    <property type="taxonomic scope" value="Bacteria"/>
</dbReference>
<dbReference type="InParanoid" id="Q9X1J3"/>
<dbReference type="OrthoDB" id="9802366at2"/>
<dbReference type="Proteomes" id="UP000008183">
    <property type="component" value="Chromosome"/>
</dbReference>
<dbReference type="GO" id="GO:0005840">
    <property type="term" value="C:ribosome"/>
    <property type="evidence" value="ECO:0000318"/>
    <property type="project" value="GO_Central"/>
</dbReference>
<dbReference type="GO" id="GO:0015935">
    <property type="term" value="C:small ribosomal subunit"/>
    <property type="evidence" value="ECO:0007669"/>
    <property type="project" value="InterPro"/>
</dbReference>
<dbReference type="GO" id="GO:0019843">
    <property type="term" value="F:rRNA binding"/>
    <property type="evidence" value="ECO:0007669"/>
    <property type="project" value="UniProtKB-UniRule"/>
</dbReference>
<dbReference type="GO" id="GO:0003735">
    <property type="term" value="F:structural constituent of ribosome"/>
    <property type="evidence" value="ECO:0000318"/>
    <property type="project" value="GO_Central"/>
</dbReference>
<dbReference type="GO" id="GO:0000049">
    <property type="term" value="F:tRNA binding"/>
    <property type="evidence" value="ECO:0007669"/>
    <property type="project" value="UniProtKB-UniRule"/>
</dbReference>
<dbReference type="GO" id="GO:0006412">
    <property type="term" value="P:translation"/>
    <property type="evidence" value="ECO:0000318"/>
    <property type="project" value="GO_Central"/>
</dbReference>
<dbReference type="CDD" id="cd03368">
    <property type="entry name" value="Ribosomal_S12"/>
    <property type="match status" value="1"/>
</dbReference>
<dbReference type="FunFam" id="2.40.50.140:FF:000001">
    <property type="entry name" value="30S ribosomal protein S12"/>
    <property type="match status" value="1"/>
</dbReference>
<dbReference type="Gene3D" id="2.40.50.140">
    <property type="entry name" value="Nucleic acid-binding proteins"/>
    <property type="match status" value="1"/>
</dbReference>
<dbReference type="HAMAP" id="MF_00403_B">
    <property type="entry name" value="Ribosomal_uS12_B"/>
    <property type="match status" value="1"/>
</dbReference>
<dbReference type="InterPro" id="IPR012340">
    <property type="entry name" value="NA-bd_OB-fold"/>
</dbReference>
<dbReference type="InterPro" id="IPR006032">
    <property type="entry name" value="Ribosomal_uS12"/>
</dbReference>
<dbReference type="InterPro" id="IPR005679">
    <property type="entry name" value="Ribosomal_uS12_bac"/>
</dbReference>
<dbReference type="NCBIfam" id="TIGR00981">
    <property type="entry name" value="rpsL_bact"/>
    <property type="match status" value="1"/>
</dbReference>
<dbReference type="PANTHER" id="PTHR11652">
    <property type="entry name" value="30S RIBOSOMAL PROTEIN S12 FAMILY MEMBER"/>
    <property type="match status" value="1"/>
</dbReference>
<dbReference type="Pfam" id="PF00164">
    <property type="entry name" value="Ribosom_S12_S23"/>
    <property type="match status" value="1"/>
</dbReference>
<dbReference type="PIRSF" id="PIRSF002133">
    <property type="entry name" value="Ribosomal_S12/S23"/>
    <property type="match status" value="1"/>
</dbReference>
<dbReference type="PRINTS" id="PR01034">
    <property type="entry name" value="RIBOSOMALS12"/>
</dbReference>
<dbReference type="SUPFAM" id="SSF50249">
    <property type="entry name" value="Nucleic acid-binding proteins"/>
    <property type="match status" value="1"/>
</dbReference>
<dbReference type="PROSITE" id="PS00055">
    <property type="entry name" value="RIBOSOMAL_S12"/>
    <property type="match status" value="1"/>
</dbReference>
<protein>
    <recommendedName>
        <fullName evidence="2">Small ribosomal subunit protein uS12</fullName>
    </recommendedName>
    <alternativeName>
        <fullName evidence="4">30S ribosomal protein S12</fullName>
    </alternativeName>
</protein>
<evidence type="ECO:0000250" key="1"/>
<evidence type="ECO:0000255" key="2">
    <source>
        <dbReference type="HAMAP-Rule" id="MF_00403"/>
    </source>
</evidence>
<evidence type="ECO:0000256" key="3">
    <source>
        <dbReference type="SAM" id="MobiDB-lite"/>
    </source>
</evidence>
<evidence type="ECO:0000305" key="4"/>
<sequence length="127" mass="14061">MPTINQLIRYGRKPKKKKSKAPALQGNPQKRGVCIKVSTMTPKKPNSALRKIARVRLSNGIEVTAYIPGIGHNLQEHSVVLVRGGRVKDLPGVRYKIIRGALDAAGVEGRRQSRSKYGAKRPKDQKK</sequence>
<gene>
    <name evidence="2" type="primary">rpsL</name>
    <name type="ordered locus">TM_1505</name>
</gene>
<keyword id="KW-0488">Methylation</keyword>
<keyword id="KW-1185">Reference proteome</keyword>
<keyword id="KW-0687">Ribonucleoprotein</keyword>
<keyword id="KW-0689">Ribosomal protein</keyword>
<keyword id="KW-0694">RNA-binding</keyword>
<keyword id="KW-0699">rRNA-binding</keyword>
<keyword id="KW-0820">tRNA-binding</keyword>
<reference key="1">
    <citation type="journal article" date="1999" name="Nature">
        <title>Evidence for lateral gene transfer between Archaea and Bacteria from genome sequence of Thermotoga maritima.</title>
        <authorList>
            <person name="Nelson K.E."/>
            <person name="Clayton R.A."/>
            <person name="Gill S.R."/>
            <person name="Gwinn M.L."/>
            <person name="Dodson R.J."/>
            <person name="Haft D.H."/>
            <person name="Hickey E.K."/>
            <person name="Peterson J.D."/>
            <person name="Nelson W.C."/>
            <person name="Ketchum K.A."/>
            <person name="McDonald L.A."/>
            <person name="Utterback T.R."/>
            <person name="Malek J.A."/>
            <person name="Linher K.D."/>
            <person name="Garrett M.M."/>
            <person name="Stewart A.M."/>
            <person name="Cotton M.D."/>
            <person name="Pratt M.S."/>
            <person name="Phillips C.A."/>
            <person name="Richardson D.L."/>
            <person name="Heidelberg J.F."/>
            <person name="Sutton G.G."/>
            <person name="Fleischmann R.D."/>
            <person name="Eisen J.A."/>
            <person name="White O."/>
            <person name="Salzberg S.L."/>
            <person name="Smith H.O."/>
            <person name="Venter J.C."/>
            <person name="Fraser C.M."/>
        </authorList>
    </citation>
    <scope>NUCLEOTIDE SEQUENCE [LARGE SCALE GENOMIC DNA]</scope>
    <source>
        <strain>ATCC 43589 / DSM 3109 / JCM 10099 / NBRC 100826 / MSB8</strain>
    </source>
</reference>